<dbReference type="EMBL" id="EF672604">
    <property type="protein sequence ID" value="ABV53282.1"/>
    <property type="molecule type" value="Genomic_RNA"/>
</dbReference>
<dbReference type="Proteomes" id="UP000007047">
    <property type="component" value="Genome"/>
</dbReference>
<dbReference type="GO" id="GO:0030430">
    <property type="term" value="C:host cell cytoplasm"/>
    <property type="evidence" value="ECO:0007669"/>
    <property type="project" value="UniProtKB-SubCell"/>
</dbReference>
<dbReference type="GO" id="GO:0016887">
    <property type="term" value="F:ATP hydrolysis activity"/>
    <property type="evidence" value="ECO:0007669"/>
    <property type="project" value="UniProtKB-UniRule"/>
</dbReference>
<dbReference type="GO" id="GO:0000287">
    <property type="term" value="F:magnesium ion binding"/>
    <property type="evidence" value="ECO:0007669"/>
    <property type="project" value="UniProtKB-UniRule"/>
</dbReference>
<dbReference type="GO" id="GO:0000166">
    <property type="term" value="F:nucleotide binding"/>
    <property type="evidence" value="ECO:0007669"/>
    <property type="project" value="UniProtKB-UniRule"/>
</dbReference>
<dbReference type="GO" id="GO:0003723">
    <property type="term" value="F:RNA binding"/>
    <property type="evidence" value="ECO:0007669"/>
    <property type="project" value="UniProtKB-UniRule"/>
</dbReference>
<dbReference type="GO" id="GO:0019079">
    <property type="term" value="P:viral genome replication"/>
    <property type="evidence" value="ECO:0007669"/>
    <property type="project" value="UniProtKB-UniRule"/>
</dbReference>
<dbReference type="HAMAP" id="MF_04092">
    <property type="entry name" value="ROTA_NSP5"/>
    <property type="match status" value="1"/>
</dbReference>
<dbReference type="InterPro" id="IPR002512">
    <property type="entry name" value="Rotavirus_A/C_NSP5"/>
</dbReference>
<dbReference type="Pfam" id="PF01525">
    <property type="entry name" value="Rota_NS26"/>
    <property type="match status" value="2"/>
</dbReference>
<dbReference type="PIRSF" id="PIRSF004006">
    <property type="entry name" value="Rota_NS26"/>
    <property type="match status" value="1"/>
</dbReference>
<evidence type="ECO:0000255" key="1">
    <source>
        <dbReference type="HAMAP-Rule" id="MF_04092"/>
    </source>
</evidence>
<evidence type="ECO:0000256" key="2">
    <source>
        <dbReference type="SAM" id="MobiDB-lite"/>
    </source>
</evidence>
<feature type="chain" id="PRO_0000369507" description="Non-structural protein 5">
    <location>
        <begin position="1"/>
        <end position="197"/>
    </location>
</feature>
<feature type="region of interest" description="Disordered" evidence="2">
    <location>
        <begin position="17"/>
        <end position="36"/>
    </location>
</feature>
<feature type="region of interest" description="Disordered" evidence="2">
    <location>
        <begin position="131"/>
        <end position="167"/>
    </location>
</feature>
<feature type="compositionally biased region" description="Low complexity" evidence="2">
    <location>
        <begin position="17"/>
        <end position="30"/>
    </location>
</feature>
<feature type="compositionally biased region" description="Acidic residues" evidence="2">
    <location>
        <begin position="152"/>
        <end position="165"/>
    </location>
</feature>
<feature type="binding site" evidence="1">
    <location>
        <position position="92"/>
    </location>
    <ligand>
        <name>Mg(2+)</name>
        <dbReference type="ChEBI" id="CHEBI:18420"/>
    </ligand>
</feature>
<feature type="modified residue" description="Phosphoserine; by host CK1" evidence="1">
    <location>
        <position position="67"/>
    </location>
</feature>
<feature type="modified residue" description="Phosphoserine; by host" evidence="1">
    <location>
        <position position="153"/>
    </location>
</feature>
<feature type="modified residue" description="Phosphoserine; by host" evidence="1">
    <location>
        <position position="155"/>
    </location>
</feature>
<feature type="modified residue" description="Phosphoserine; by host" evidence="1">
    <location>
        <position position="163"/>
    </location>
</feature>
<feature type="modified residue" description="Phosphoserine; by host" evidence="1">
    <location>
        <position position="165"/>
    </location>
</feature>
<name>NSP5_ROTHP</name>
<organismHost>
    <name type="scientific">Homo sapiens</name>
    <name type="common">Human</name>
    <dbReference type="NCBI Taxonomy" id="9606"/>
</organismHost>
<reference key="1">
    <citation type="journal article" date="2008" name="J. Virol.">
        <title>Group A human rotavirus genomics: evidence that gene constellations are influenced by viral protein interactions.</title>
        <authorList>
            <person name="Heiman E.M."/>
            <person name="McDonald S.M."/>
            <person name="Barro M."/>
            <person name="Taraporewala Z.F."/>
            <person name="Bar-Magen T."/>
            <person name="Patton J.T."/>
        </authorList>
    </citation>
    <scope>NUCLEOTIDE SEQUENCE [GENOMIC RNA]</scope>
</reference>
<sequence>MSLSIDVTSLPSISSSIFKNESSSTTSTLSGKSIGRSEQYISPDAEAFNKYMLSKSLEDIGPSDSASNDPLTSFSIRSNAVKTNADAGVSMDSSTQSRPSSNVGCDQLDFSLTKGVNVSANLDSCISISTDHKKEKSKKDKSRKHYPRIEADSDSEDYVLDDSDSDDGKCKNCKYKKKYFALRMRMKRVAMQLIEDL</sequence>
<organism>
    <name type="scientific">Rotavirus A (strain RVA/Human/United States/P/1974/G3P1A[8])</name>
    <name type="common">RV-A</name>
    <dbReference type="NCBI Taxonomy" id="10957"/>
    <lineage>
        <taxon>Viruses</taxon>
        <taxon>Riboviria</taxon>
        <taxon>Orthornavirae</taxon>
        <taxon>Duplornaviricota</taxon>
        <taxon>Resentoviricetes</taxon>
        <taxon>Reovirales</taxon>
        <taxon>Sedoreoviridae</taxon>
        <taxon>Rotavirus</taxon>
        <taxon>Rotavirus A</taxon>
    </lineage>
</organism>
<proteinExistence type="inferred from homology"/>
<protein>
    <recommendedName>
        <fullName evidence="1">Non-structural protein 5</fullName>
        <shortName evidence="1">NSP5</shortName>
    </recommendedName>
    <alternativeName>
        <fullName evidence="1">NS26</fullName>
    </alternativeName>
</protein>
<accession>B3SRV7</accession>
<comment type="function">
    <text evidence="1">Plays an essential role in the viral genome replication. Participates, together with NSP2, in the formation of viral factories (viroplasms), which are large inclusions in the host cytoplasm where replication intermediates are assembled and viral RNA replication takes place. Orchestrates the recruitment of viroplasmic proteins such as capsid proteins to these factories. Participates in the selective exclusion of host proteins from stress granules (SG) and P bodies (PB). Also participates in the sequestration of these remodeled organelles in viral factories.</text>
</comment>
<comment type="cofactor">
    <cofactor evidence="1">
        <name>Mg(2+)</name>
        <dbReference type="ChEBI" id="CHEBI:18420"/>
    </cofactor>
</comment>
<comment type="subunit">
    <text evidence="1">Homodimer. Interacts with VP1. Interacts with VP2. Interacts with NSP2; this interaction leads to up-regulation of NSP5 hyperphosphorylation and formation of virus factories. Interacts with NSP6. Participates in the selective exclusion of host proteins from stress granules (SG) and P bodies (PB). Also participates in the sequestration of these remodeled organelles in viral factories.</text>
</comment>
<comment type="subcellular location">
    <subcellularLocation>
        <location evidence="1">Host cytoplasm</location>
    </subcellularLocation>
    <text evidence="1">Found in spherical cytoplasmic structures, called virus factories, that appear early after infection and are the site of viral replication and packaging.</text>
</comment>
<comment type="PTM">
    <text evidence="1">O-glycosylated.</text>
</comment>
<comment type="PTM">
    <text evidence="1">Hyperphosphorylated on serine residues, when in dimeric form. Phosphorylation by host CK1 is required for the hyperphosphorylation of NSP5 dimer.</text>
</comment>
<comment type="similarity">
    <text evidence="1">Belongs to the rotavirus NSP5 family.</text>
</comment>
<keyword id="KW-0325">Glycoprotein</keyword>
<keyword id="KW-1035">Host cytoplasm</keyword>
<keyword id="KW-0460">Magnesium</keyword>
<keyword id="KW-0479">Metal-binding</keyword>
<keyword id="KW-0547">Nucleotide-binding</keyword>
<keyword id="KW-0597">Phosphoprotein</keyword>
<keyword id="KW-0694">RNA-binding</keyword>